<comment type="function">
    <text evidence="5">May function as a large pore-forming protein.</text>
</comment>
<comment type="subcellular location">
    <subcellularLocation>
        <location evidence="2">Secreted</location>
    </subcellularLocation>
    <subcellularLocation>
        <location evidence="5">Target cell membrane</location>
    </subcellularLocation>
</comment>
<comment type="tissue specificity">
    <text evidence="2">Expressed by the venom apparatus.</text>
</comment>
<comment type="developmental stage">
    <text evidence="2">Larvae.</text>
</comment>
<comment type="PTM">
    <text evidence="5">Contains 3 disulfide bonds.</text>
</comment>
<comment type="mass spectrometry" mass="31526.9" method="MALDI" evidence="2">
    <text>Monoisotopic mass.</text>
</comment>
<comment type="similarity">
    <text evidence="4">Belongs to the megalysin family.</text>
</comment>
<reference key="1">
    <citation type="journal article" date="2023" name="Proc. Natl. Acad. Sci. U.S.A.">
        <title>Horizontal gene transfer underlies the painful stings of asp caterpillars (Lepidoptera: Megalopygidae).</title>
        <authorList>
            <person name="Walker A.A."/>
            <person name="Robinson S.D."/>
            <person name="Merritt D.J."/>
            <person name="Cardoso F.C."/>
            <person name="Goudarzi M.H."/>
            <person name="Mercedes R.S."/>
            <person name="Eagles D.A."/>
            <person name="Cooper P."/>
            <person name="Zdenek C.N."/>
            <person name="Fry B.G."/>
            <person name="Hall D.W."/>
            <person name="Vetter I."/>
            <person name="King G.F."/>
        </authorList>
    </citation>
    <scope>NUCLEOTIDE SEQUENCE [MRNA]</scope>
    <scope>MASS SPECTROMETRY</scope>
    <scope>3D-STRUCTURE MODELING</scope>
    <scope>RECOMBINANT EXPRESSION</scope>
    <scope>SUBCELLULAR LOCATION</scope>
    <scope>TISSUE SPECIFICITY</scope>
    <scope>DEVELOPMENTAL STAGE</scope>
    <source>
        <tissue>Venom</tissue>
    </source>
</reference>
<dbReference type="EMBL" id="OP514865">
    <property type="protein sequence ID" value="WJJ70383.1"/>
    <property type="molecule type" value="mRNA"/>
</dbReference>
<dbReference type="GO" id="GO:0005576">
    <property type="term" value="C:extracellular region"/>
    <property type="evidence" value="ECO:0007669"/>
    <property type="project" value="UniProtKB-SubCell"/>
</dbReference>
<dbReference type="GO" id="GO:0016020">
    <property type="term" value="C:membrane"/>
    <property type="evidence" value="ECO:0007669"/>
    <property type="project" value="UniProtKB-KW"/>
</dbReference>
<dbReference type="GO" id="GO:0044218">
    <property type="term" value="C:other organism cell membrane"/>
    <property type="evidence" value="ECO:0007669"/>
    <property type="project" value="UniProtKB-KW"/>
</dbReference>
<dbReference type="GO" id="GO:0090729">
    <property type="term" value="F:toxin activity"/>
    <property type="evidence" value="ECO:0007669"/>
    <property type="project" value="UniProtKB-KW"/>
</dbReference>
<dbReference type="CDD" id="cd20235">
    <property type="entry name" value="PFM_spherulin-2a-like"/>
    <property type="match status" value="1"/>
</dbReference>
<dbReference type="Gene3D" id="2.170.15.10">
    <property type="entry name" value="Proaerolysin, chain A, domain 3"/>
    <property type="match status" value="1"/>
</dbReference>
<dbReference type="SUPFAM" id="SSF56973">
    <property type="entry name" value="Aerolisin/ETX pore-forming domain"/>
    <property type="match status" value="1"/>
</dbReference>
<proteinExistence type="evidence at protein level"/>
<feature type="signal peptide" evidence="1">
    <location>
        <begin position="1"/>
        <end position="27"/>
    </location>
</feature>
<feature type="chain" id="PRO_0000461529" description="U-megalopygitoxin(8)-Mo15" evidence="5">
    <location>
        <begin position="28"/>
        <end position="310"/>
    </location>
</feature>
<protein>
    <recommendedName>
        <fullName evidence="3">U-megalopygitoxin(8)-Mo15</fullName>
        <shortName evidence="3">U-MPTX(8)-Mo15</shortName>
        <shortName evidence="6">U-MPTX.8-15</shortName>
    </recommendedName>
    <alternativeName>
        <fullName evidence="3">Aerolysin-like pore-forming toxin</fullName>
    </alternativeName>
    <alternativeName>
        <fullName evidence="3">Megalysin</fullName>
    </alternativeName>
</protein>
<accession>P0DXX1</accession>
<sequence length="310" mass="34567">MARFSSKNLTKLFQYLVLSLLSPVAFGNFNIEVDTRNKVLNDAAINFYGQNIGIITDGERRVFGITDGPLKEACSKVQGGKPGYVWVRSPTPANLYEIHNWRQVLRVLTAYDARIVGIEQKPEMVATQTYKNRSDHPAKVSGMITQSVSNTIENKWIEMNQFSITATVSCKVKAAEIGLSMGYERSWGKEDTNSTTTMLGQQTGFEVELPPGGNCTAVLSATKGSMKIDVGYRATLEGDCAVDFPNTWNGHHYWCYPIGLVQDVGNLKKHIDCRELITIGYYSDAHVTIENLGKKKNKKTKKPPRKTKMN</sequence>
<organism>
    <name type="scientific">Megalopyge opercularis</name>
    <name type="common">Southern flannel moth</name>
    <name type="synonym">Phalaena opercularis</name>
    <dbReference type="NCBI Taxonomy" id="1113279"/>
    <lineage>
        <taxon>Eukaryota</taxon>
        <taxon>Metazoa</taxon>
        <taxon>Ecdysozoa</taxon>
        <taxon>Arthropoda</taxon>
        <taxon>Hexapoda</taxon>
        <taxon>Insecta</taxon>
        <taxon>Pterygota</taxon>
        <taxon>Neoptera</taxon>
        <taxon>Endopterygota</taxon>
        <taxon>Lepidoptera</taxon>
        <taxon>Glossata</taxon>
        <taxon>Ditrysia</taxon>
        <taxon>Zygaenoidea</taxon>
        <taxon>Megalopygidae</taxon>
        <taxon>Megalopyge</taxon>
    </lineage>
</organism>
<keyword id="KW-1015">Disulfide bond</keyword>
<keyword id="KW-0472">Membrane</keyword>
<keyword id="KW-0964">Secreted</keyword>
<keyword id="KW-0732">Signal</keyword>
<keyword id="KW-1052">Target cell membrane</keyword>
<keyword id="KW-1053">Target membrane</keyword>
<keyword id="KW-0800">Toxin</keyword>
<name>TXU8F_MEGOP</name>
<evidence type="ECO:0000255" key="1"/>
<evidence type="ECO:0000269" key="2">
    <source>
    </source>
</evidence>
<evidence type="ECO:0000303" key="3">
    <source>
    </source>
</evidence>
<evidence type="ECO:0000305" key="4"/>
<evidence type="ECO:0000305" key="5">
    <source>
    </source>
</evidence>
<evidence type="ECO:0000312" key="6">
    <source>
        <dbReference type="EMBL" id="WJJ70383.1"/>
    </source>
</evidence>